<reference key="1">
    <citation type="journal article" date="2004" name="Proc. Natl. Acad. Sci. U.S.A.">
        <title>Complete genomes of two clinical Staphylococcus aureus strains: evidence for the rapid evolution of virulence and drug resistance.</title>
        <authorList>
            <person name="Holden M.T.G."/>
            <person name="Feil E.J."/>
            <person name="Lindsay J.A."/>
            <person name="Peacock S.J."/>
            <person name="Day N.P.J."/>
            <person name="Enright M.C."/>
            <person name="Foster T.J."/>
            <person name="Moore C.E."/>
            <person name="Hurst L."/>
            <person name="Atkin R."/>
            <person name="Barron A."/>
            <person name="Bason N."/>
            <person name="Bentley S.D."/>
            <person name="Chillingworth C."/>
            <person name="Chillingworth T."/>
            <person name="Churcher C."/>
            <person name="Clark L."/>
            <person name="Corton C."/>
            <person name="Cronin A."/>
            <person name="Doggett J."/>
            <person name="Dowd L."/>
            <person name="Feltwell T."/>
            <person name="Hance Z."/>
            <person name="Harris B."/>
            <person name="Hauser H."/>
            <person name="Holroyd S."/>
            <person name="Jagels K."/>
            <person name="James K.D."/>
            <person name="Lennard N."/>
            <person name="Line A."/>
            <person name="Mayes R."/>
            <person name="Moule S."/>
            <person name="Mungall K."/>
            <person name="Ormond D."/>
            <person name="Quail M.A."/>
            <person name="Rabbinowitsch E."/>
            <person name="Rutherford K.M."/>
            <person name="Sanders M."/>
            <person name="Sharp S."/>
            <person name="Simmonds M."/>
            <person name="Stevens K."/>
            <person name="Whitehead S."/>
            <person name="Barrell B.G."/>
            <person name="Spratt B.G."/>
            <person name="Parkhill J."/>
        </authorList>
    </citation>
    <scope>NUCLEOTIDE SEQUENCE [LARGE SCALE GENOMIC DNA]</scope>
    <source>
        <strain>MRSA252</strain>
    </source>
</reference>
<proteinExistence type="inferred from homology"/>
<sequence>MDSHFVYIVKCSDGSLYTGYAKDVNARVEKHNRGQGAKYTKVRRPVHLVYQEMYETKSEALKREYEIKTYTRQKKLRLIKER</sequence>
<comment type="similarity">
    <text evidence="2">Belongs to the UPF0213 family.</text>
</comment>
<dbReference type="EMBL" id="BX571856">
    <property type="protein sequence ID" value="CAG39511.1"/>
    <property type="molecule type" value="Genomic_DNA"/>
</dbReference>
<dbReference type="RefSeq" id="WP_000377064.1">
    <property type="nucleotide sequence ID" value="NC_002952.2"/>
</dbReference>
<dbReference type="SMR" id="Q6GJI3"/>
<dbReference type="KEGG" id="sar:SAR0489"/>
<dbReference type="HOGENOM" id="CLU_135650_0_3_9"/>
<dbReference type="Proteomes" id="UP000000596">
    <property type="component" value="Chromosome"/>
</dbReference>
<dbReference type="CDD" id="cd10456">
    <property type="entry name" value="GIY-YIG_UPF0213"/>
    <property type="match status" value="1"/>
</dbReference>
<dbReference type="Gene3D" id="3.40.1440.10">
    <property type="entry name" value="GIY-YIG endonuclease"/>
    <property type="match status" value="1"/>
</dbReference>
<dbReference type="InterPro" id="IPR000305">
    <property type="entry name" value="GIY-YIG_endonuc"/>
</dbReference>
<dbReference type="InterPro" id="IPR035901">
    <property type="entry name" value="GIY-YIG_endonuc_sf"/>
</dbReference>
<dbReference type="InterPro" id="IPR050190">
    <property type="entry name" value="UPF0213_domain"/>
</dbReference>
<dbReference type="PANTHER" id="PTHR34477">
    <property type="entry name" value="UPF0213 PROTEIN YHBQ"/>
    <property type="match status" value="1"/>
</dbReference>
<dbReference type="PANTHER" id="PTHR34477:SF1">
    <property type="entry name" value="UPF0213 PROTEIN YHBQ"/>
    <property type="match status" value="1"/>
</dbReference>
<dbReference type="Pfam" id="PF01541">
    <property type="entry name" value="GIY-YIG"/>
    <property type="match status" value="1"/>
</dbReference>
<dbReference type="SMART" id="SM00465">
    <property type="entry name" value="GIYc"/>
    <property type="match status" value="1"/>
</dbReference>
<dbReference type="SUPFAM" id="SSF82771">
    <property type="entry name" value="GIY-YIG endonuclease"/>
    <property type="match status" value="1"/>
</dbReference>
<dbReference type="PROSITE" id="PS50164">
    <property type="entry name" value="GIY_YIG"/>
    <property type="match status" value="1"/>
</dbReference>
<feature type="chain" id="PRO_0000161384" description="UPF0213 protein SAR0489">
    <location>
        <begin position="1"/>
        <end position="82"/>
    </location>
</feature>
<feature type="domain" description="GIY-YIG" evidence="1">
    <location>
        <begin position="2"/>
        <end position="77"/>
    </location>
</feature>
<protein>
    <recommendedName>
        <fullName>UPF0213 protein SAR0489</fullName>
    </recommendedName>
</protein>
<organism>
    <name type="scientific">Staphylococcus aureus (strain MRSA252)</name>
    <dbReference type="NCBI Taxonomy" id="282458"/>
    <lineage>
        <taxon>Bacteria</taxon>
        <taxon>Bacillati</taxon>
        <taxon>Bacillota</taxon>
        <taxon>Bacilli</taxon>
        <taxon>Bacillales</taxon>
        <taxon>Staphylococcaceae</taxon>
        <taxon>Staphylococcus</taxon>
    </lineage>
</organism>
<accession>Q6GJI3</accession>
<name>Y489_STAAR</name>
<gene>
    <name type="ordered locus">SAR0489</name>
</gene>
<evidence type="ECO:0000255" key="1">
    <source>
        <dbReference type="PROSITE-ProRule" id="PRU00977"/>
    </source>
</evidence>
<evidence type="ECO:0000305" key="2"/>